<proteinExistence type="evidence at protein level"/>
<protein>
    <recommendedName>
        <fullName evidence="1">tRNA N6-adenosine threonylcarbamoyltransferase</fullName>
        <ecNumber evidence="1">2.3.1.234</ecNumber>
    </recommendedName>
    <alternativeName>
        <fullName evidence="1">N6-L-threonylcarbamoyladenine synthase</fullName>
        <shortName evidence="1">t(6)A synthase</shortName>
    </alternativeName>
    <alternativeName>
        <fullName evidence="1">t(6)A37 threonylcarbamoyladenosine biosynthesis protein TsaD</fullName>
    </alternativeName>
    <alternativeName>
        <fullName evidence="1">tRNA threonylcarbamoyladenosine biosynthesis protein TsaD</fullName>
    </alternativeName>
</protein>
<evidence type="ECO:0000255" key="1">
    <source>
        <dbReference type="HAMAP-Rule" id="MF_01445"/>
    </source>
</evidence>
<evidence type="ECO:0000269" key="2">
    <source>
    </source>
</evidence>
<evidence type="ECO:0000269" key="3">
    <source>
    </source>
</evidence>
<feature type="chain" id="PRO_0000303551" description="tRNA N6-adenosine threonylcarbamoyltransferase">
    <location>
        <begin position="1"/>
        <end position="341"/>
    </location>
</feature>
<feature type="binding site" evidence="1">
    <location>
        <position position="115"/>
    </location>
    <ligand>
        <name>Fe cation</name>
        <dbReference type="ChEBI" id="CHEBI:24875"/>
    </ligand>
</feature>
<feature type="binding site" evidence="1">
    <location>
        <position position="119"/>
    </location>
    <ligand>
        <name>Fe cation</name>
        <dbReference type="ChEBI" id="CHEBI:24875"/>
    </ligand>
</feature>
<feature type="binding site" evidence="1">
    <location>
        <begin position="137"/>
        <end position="141"/>
    </location>
    <ligand>
        <name>substrate</name>
    </ligand>
</feature>
<feature type="binding site" evidence="1">
    <location>
        <position position="170"/>
    </location>
    <ligand>
        <name>substrate</name>
    </ligand>
</feature>
<feature type="binding site" evidence="1">
    <location>
        <position position="183"/>
    </location>
    <ligand>
        <name>substrate</name>
    </ligand>
</feature>
<feature type="binding site" evidence="1">
    <location>
        <position position="187"/>
    </location>
    <ligand>
        <name>substrate</name>
    </ligand>
</feature>
<feature type="binding site" evidence="1">
    <location>
        <position position="276"/>
    </location>
    <ligand>
        <name>substrate</name>
    </ligand>
</feature>
<feature type="binding site" evidence="1">
    <location>
        <position position="304"/>
    </location>
    <ligand>
        <name>Fe cation</name>
        <dbReference type="ChEBI" id="CHEBI:24875"/>
    </ligand>
</feature>
<keyword id="KW-0012">Acyltransferase</keyword>
<keyword id="KW-0963">Cytoplasm</keyword>
<keyword id="KW-0408">Iron</keyword>
<keyword id="KW-0479">Metal-binding</keyword>
<keyword id="KW-1185">Reference proteome</keyword>
<keyword id="KW-0808">Transferase</keyword>
<keyword id="KW-0819">tRNA processing</keyword>
<organism>
    <name type="scientific">Staphylococcus aureus (strain NCTC 8325 / PS 47)</name>
    <dbReference type="NCBI Taxonomy" id="93061"/>
    <lineage>
        <taxon>Bacteria</taxon>
        <taxon>Bacillati</taxon>
        <taxon>Bacillota</taxon>
        <taxon>Bacilli</taxon>
        <taxon>Bacillales</taxon>
        <taxon>Staphylococcaceae</taxon>
        <taxon>Staphylococcus</taxon>
    </lineage>
</organism>
<reference key="1">
    <citation type="book" date="2006" name="Gram positive pathogens, 2nd edition">
        <title>The Staphylococcus aureus NCTC 8325 genome.</title>
        <editorList>
            <person name="Fischetti V."/>
            <person name="Novick R."/>
            <person name="Ferretti J."/>
            <person name="Portnoy D."/>
            <person name="Rood J."/>
        </editorList>
        <authorList>
            <person name="Gillaspy A.F."/>
            <person name="Worrell V."/>
            <person name="Orvis J."/>
            <person name="Roe B.A."/>
            <person name="Dyer D.W."/>
            <person name="Iandolo J.J."/>
        </authorList>
    </citation>
    <scope>NUCLEOTIDE SEQUENCE [LARGE SCALE GENOMIC DNA]</scope>
    <source>
        <strain>NCTC 8325 / PS 47</strain>
    </source>
</reference>
<reference key="2">
    <citation type="journal article" date="2005" name="FEMS Microbiol. Lett.">
        <title>Identification of an essential glycoprotease in Staphylococcus aureus.</title>
        <authorList>
            <person name="Zheng L."/>
            <person name="Yang J."/>
            <person name="Landwehr C."/>
            <person name="Fan F."/>
            <person name="Ji Y."/>
        </authorList>
    </citation>
    <scope>FUNCTION IN CELL VIABILITY</scope>
</reference>
<reference key="3">
    <citation type="journal article" date="2007" name="J. Bacteriol.">
        <title>Conditional mutation of an essential putative glycoprotease eliminates autolysis in Staphylococcus aureus.</title>
        <authorList>
            <person name="Zheng L."/>
            <person name="Yu C."/>
            <person name="Bayles K."/>
            <person name="Lasa I."/>
            <person name="Ji Y."/>
        </authorList>
    </citation>
    <scope>FUNCTION</scope>
</reference>
<name>TSAD_STAA8</name>
<gene>
    <name evidence="1" type="primary">tsaD</name>
    <name type="synonym">gcp</name>
    <name type="ordered locus">SAOUHSC_02277</name>
</gene>
<sequence>MTKDILILAVETSCDETSVSVIKNGRDILSNTVLSQIESHKRFGGVVPEVASRHHVEGITATINEALGDADVSIEDIDAIAVTEGPGLIGALLIGVNAAKALAFAYDKPLIPVHHIAGHIYANHIEEPLTFPLIALIVSGGHTELVYMKDHLSFEVIGETRDDAVGEAYDKVARTIGLNYPGGPQVDRLAAEGEDTYSFPRVWLDKDSYDFSFSGLKSAVINQLHNQRQKNIPIIEANVATSFQNSVVEVLTFKAIQACKEYGVQRLIVAGGVASNKGLRQSLADQCKVNDIQLTIPSPKLCTDNAAMIGVAGHYLYQQGRFADLALNGHSNIDLEEYSAE</sequence>
<comment type="function">
    <text evidence="1 2 3">Required for the formation of a threonylcarbamoyl group on adenosine at position 37 (t(6)A37) in tRNAs that read codons beginning with adenine. Is involved in the transfer of the threonylcarbamoyl moiety of threonylcarbamoyl-AMP (TC-AMP) to the N6 group of A37, together with TsaE and TsaB. TsaD likely plays a direct catalytic role in this reaction (By similarity). Critical mediator involved in the modification of cell wall peptidoglycan synthesis and/or cell division as well as in the positive regulation of the activities of different murein hydrolases. Essential for cell viability. Negatively affects the expression of lrgA. Positively affects cidA expression, maybe indirectly. May be an important chelator of excess zinc. Down-regulation of gcp/tsaD eliminates penicillin- and vancomycin-caused cell lysis, inhibits several extracellular hydrolase activities, dramatically increasing tolerance to hydrolases and leads to a bacteriostatic effect.</text>
</comment>
<comment type="catalytic activity">
    <reaction evidence="1">
        <text>L-threonylcarbamoyladenylate + adenosine(37) in tRNA = N(6)-L-threonylcarbamoyladenosine(37) in tRNA + AMP + H(+)</text>
        <dbReference type="Rhea" id="RHEA:37059"/>
        <dbReference type="Rhea" id="RHEA-COMP:10162"/>
        <dbReference type="Rhea" id="RHEA-COMP:10163"/>
        <dbReference type="ChEBI" id="CHEBI:15378"/>
        <dbReference type="ChEBI" id="CHEBI:73682"/>
        <dbReference type="ChEBI" id="CHEBI:74411"/>
        <dbReference type="ChEBI" id="CHEBI:74418"/>
        <dbReference type="ChEBI" id="CHEBI:456215"/>
        <dbReference type="EC" id="2.3.1.234"/>
    </reaction>
</comment>
<comment type="cofactor">
    <cofactor evidence="1">
        <name>Fe(2+)</name>
        <dbReference type="ChEBI" id="CHEBI:29033"/>
    </cofactor>
    <text evidence="1">Binds 1 Fe(2+) ion per subunit.</text>
</comment>
<comment type="subcellular location">
    <subcellularLocation>
        <location evidence="1">Cytoplasm</location>
    </subcellularLocation>
</comment>
<comment type="similarity">
    <text evidence="1">Belongs to the KAE1 / TsaD family.</text>
</comment>
<accession>Q2FWL2</accession>
<dbReference type="EC" id="2.3.1.234" evidence="1"/>
<dbReference type="EMBL" id="CP000253">
    <property type="protein sequence ID" value="ABD31315.1"/>
    <property type="molecule type" value="Genomic_DNA"/>
</dbReference>
<dbReference type="RefSeq" id="WP_000159034.1">
    <property type="nucleotide sequence ID" value="NZ_LS483365.1"/>
</dbReference>
<dbReference type="RefSeq" id="YP_500758.1">
    <property type="nucleotide sequence ID" value="NC_007795.1"/>
</dbReference>
<dbReference type="SMR" id="Q2FWL2"/>
<dbReference type="STRING" id="93061.SAOUHSC_02277"/>
<dbReference type="PaxDb" id="1280-SAXN108_2292"/>
<dbReference type="GeneID" id="3919152"/>
<dbReference type="KEGG" id="sao:SAOUHSC_02277"/>
<dbReference type="PATRIC" id="fig|93061.5.peg.2067"/>
<dbReference type="eggNOG" id="COG0533">
    <property type="taxonomic scope" value="Bacteria"/>
</dbReference>
<dbReference type="HOGENOM" id="CLU_023208_0_2_9"/>
<dbReference type="OrthoDB" id="9806197at2"/>
<dbReference type="PRO" id="PR:Q2FWL2"/>
<dbReference type="Proteomes" id="UP000008816">
    <property type="component" value="Chromosome"/>
</dbReference>
<dbReference type="GO" id="GO:0005737">
    <property type="term" value="C:cytoplasm"/>
    <property type="evidence" value="ECO:0007669"/>
    <property type="project" value="UniProtKB-SubCell"/>
</dbReference>
<dbReference type="GO" id="GO:0005506">
    <property type="term" value="F:iron ion binding"/>
    <property type="evidence" value="ECO:0007669"/>
    <property type="project" value="UniProtKB-UniRule"/>
</dbReference>
<dbReference type="GO" id="GO:0061711">
    <property type="term" value="F:N(6)-L-threonylcarbamoyladenine synthase activity"/>
    <property type="evidence" value="ECO:0007669"/>
    <property type="project" value="UniProtKB-EC"/>
</dbReference>
<dbReference type="GO" id="GO:0002949">
    <property type="term" value="P:tRNA threonylcarbamoyladenosine modification"/>
    <property type="evidence" value="ECO:0007669"/>
    <property type="project" value="UniProtKB-UniRule"/>
</dbReference>
<dbReference type="CDD" id="cd24133">
    <property type="entry name" value="ASKHA_NBD_TsaD_bac"/>
    <property type="match status" value="1"/>
</dbReference>
<dbReference type="FunFam" id="3.30.420.40:FF:000012">
    <property type="entry name" value="tRNA N6-adenosine threonylcarbamoyltransferase"/>
    <property type="match status" value="1"/>
</dbReference>
<dbReference type="FunFam" id="3.30.420.40:FF:000040">
    <property type="entry name" value="tRNA N6-adenosine threonylcarbamoyltransferase"/>
    <property type="match status" value="1"/>
</dbReference>
<dbReference type="Gene3D" id="3.30.420.40">
    <property type="match status" value="2"/>
</dbReference>
<dbReference type="HAMAP" id="MF_01445">
    <property type="entry name" value="TsaD"/>
    <property type="match status" value="1"/>
</dbReference>
<dbReference type="InterPro" id="IPR043129">
    <property type="entry name" value="ATPase_NBD"/>
</dbReference>
<dbReference type="InterPro" id="IPR000905">
    <property type="entry name" value="Gcp-like_dom"/>
</dbReference>
<dbReference type="InterPro" id="IPR017861">
    <property type="entry name" value="KAE1/TsaD"/>
</dbReference>
<dbReference type="InterPro" id="IPR017860">
    <property type="entry name" value="Peptidase_M22_CS"/>
</dbReference>
<dbReference type="InterPro" id="IPR022450">
    <property type="entry name" value="TsaD"/>
</dbReference>
<dbReference type="NCBIfam" id="TIGR00329">
    <property type="entry name" value="gcp_kae1"/>
    <property type="match status" value="1"/>
</dbReference>
<dbReference type="NCBIfam" id="TIGR03723">
    <property type="entry name" value="T6A_TsaD_YgjD"/>
    <property type="match status" value="1"/>
</dbReference>
<dbReference type="PANTHER" id="PTHR11735">
    <property type="entry name" value="TRNA N6-ADENOSINE THREONYLCARBAMOYLTRANSFERASE"/>
    <property type="match status" value="1"/>
</dbReference>
<dbReference type="PANTHER" id="PTHR11735:SF6">
    <property type="entry name" value="TRNA N6-ADENOSINE THREONYLCARBAMOYLTRANSFERASE, MITOCHONDRIAL"/>
    <property type="match status" value="1"/>
</dbReference>
<dbReference type="Pfam" id="PF00814">
    <property type="entry name" value="TsaD"/>
    <property type="match status" value="1"/>
</dbReference>
<dbReference type="PRINTS" id="PR00789">
    <property type="entry name" value="OSIALOPTASE"/>
</dbReference>
<dbReference type="SUPFAM" id="SSF53067">
    <property type="entry name" value="Actin-like ATPase domain"/>
    <property type="match status" value="2"/>
</dbReference>
<dbReference type="PROSITE" id="PS01016">
    <property type="entry name" value="GLYCOPROTEASE"/>
    <property type="match status" value="1"/>
</dbReference>